<accession>Q5AUY3</accession>
<accession>A0A1U8QLN1</accession>
<accession>C8V4J6</accession>
<organism>
    <name type="scientific">Emericella nidulans (strain FGSC A4 / ATCC 38163 / CBS 112.46 / NRRL 194 / M139)</name>
    <name type="common">Aspergillus nidulans</name>
    <dbReference type="NCBI Taxonomy" id="227321"/>
    <lineage>
        <taxon>Eukaryota</taxon>
        <taxon>Fungi</taxon>
        <taxon>Dikarya</taxon>
        <taxon>Ascomycota</taxon>
        <taxon>Pezizomycotina</taxon>
        <taxon>Eurotiomycetes</taxon>
        <taxon>Eurotiomycetidae</taxon>
        <taxon>Eurotiales</taxon>
        <taxon>Aspergillaceae</taxon>
        <taxon>Aspergillus</taxon>
        <taxon>Aspergillus subgen. Nidulantes</taxon>
    </lineage>
</organism>
<proteinExistence type="evidence at transcript level"/>
<feature type="signal peptide" evidence="3">
    <location>
        <begin position="1"/>
        <end position="23"/>
    </location>
</feature>
<feature type="chain" id="PRO_5010288540" description="FAD-dependent monooxygenase dbaB" evidence="3">
    <location>
        <begin position="24"/>
        <end position="393"/>
    </location>
</feature>
<feature type="active site" evidence="2">
    <location>
        <position position="221"/>
    </location>
</feature>
<feature type="binding site" evidence="2">
    <location>
        <position position="37"/>
    </location>
    <ligand>
        <name>FAD</name>
        <dbReference type="ChEBI" id="CHEBI:57692"/>
    </ligand>
</feature>
<feature type="binding site" evidence="2">
    <location>
        <position position="107"/>
    </location>
    <ligand>
        <name>FAD</name>
        <dbReference type="ChEBI" id="CHEBI:57692"/>
    </ligand>
</feature>
<feature type="binding site" evidence="2">
    <location>
        <position position="320"/>
    </location>
    <ligand>
        <name>FAD</name>
        <dbReference type="ChEBI" id="CHEBI:57692"/>
    </ligand>
</feature>
<feature type="glycosylation site" description="N-linked (GlcNAc...) asparagine" evidence="4">
    <location>
        <position position="128"/>
    </location>
</feature>
<feature type="glycosylation site" description="N-linked (GlcNAc...) asparagine" evidence="4">
    <location>
        <position position="233"/>
    </location>
</feature>
<comment type="function">
    <text evidence="5 6 10">FAD-dependent monooxygenase; part of the gene cluster that mediates the biosynthesis of the antibiotic 2,4-dihydroxy-3-methyl-6-(2-oxopropyl)benzaldehyde (DHMBA) and its derivatives (PubMed:22510154, PubMed:23001671). The direct non-reducing polyketide synthase dbaI product is 2,4-dihydroxy-3-methyl-6-(2-oxopropyl)benzaldehyde (DHMBA), produced by condensation of one acetyl-CoA starter unit with 4 malonyl-CoA units and one methylation step (PubMed:22510154). The FAD-dependent monooxygenase dbaH is responsible for the synthesis of yellow pigments derived from the oxidation of DHMBA (PubMed:23001671). The roles of dbaB, C, E and F have still to be determined (Probable).</text>
</comment>
<comment type="cofactor">
    <cofactor evidence="1">
        <name>FAD</name>
        <dbReference type="ChEBI" id="CHEBI:57692"/>
    </cofactor>
</comment>
<comment type="pathway">
    <text evidence="10">Secondary metabolite biosynthesis.</text>
</comment>
<comment type="induction">
    <text evidence="6 7">Deletion of the conserved eukaryotic csnE deneddylase subunit of the COP9 signalosome leading to defect in protein degradation results in the activation of the silenced dba gene cluster (PubMed:23001671). Expression is positively regulated by the dba cluster specific transcription factor dbaA (PubMed:23001671). Expression is also controlled by the transcription factor flbB (PubMed:25701285).</text>
</comment>
<comment type="disruption phenotype">
    <text evidence="6">Does not lead to any phenotypic changes.</text>
</comment>
<comment type="similarity">
    <text evidence="9">Belongs to the paxM FAD-dependent monooxygenase family.</text>
</comment>
<protein>
    <recommendedName>
        <fullName evidence="8">FAD-dependent monooxygenase dbaB</fullName>
        <ecNumber evidence="10">1.-.-.-</ecNumber>
    </recommendedName>
    <alternativeName>
        <fullName evidence="8">Derivative of benzaldehyde biosynthesis cluster protein B</fullName>
    </alternativeName>
</protein>
<keyword id="KW-0274">FAD</keyword>
<keyword id="KW-0285">Flavoprotein</keyword>
<keyword id="KW-0325">Glycoprotein</keyword>
<keyword id="KW-0503">Monooxygenase</keyword>
<keyword id="KW-0560">Oxidoreductase</keyword>
<keyword id="KW-1185">Reference proteome</keyword>
<keyword id="KW-0732">Signal</keyword>
<gene>
    <name evidence="8" type="primary">dbaB</name>
    <name type="ORF">ANIA_07897</name>
</gene>
<name>DBAB_EMENI</name>
<sequence>MTRTSPTLPVIILGAGMVGLTLAQALKKAGIPYEVYERDSAADTEKGRGWALTVHWALNALEECLPAELFNRLEEIQVDPTLDDSRRFCFLDLSTAIPKYVIPPSKRLRVNRRLLGNLLGEGLDINYNKTLSSFHVSPETPDSVTVTFTDGTSTTGCLLVGTDGRNSKTRRLLLGEEAGALNPLPVRSIGTTITMTPEQFAPIREIDPLLFQGSHPETGVYMWFSLVSSPTINGSKDTPNPFYEGQLIQSWLYKSEKDAVPETDADRLALFKNNAQHFQRRLREAIETLPEDSKVLHIKLVDWVPVDWDNRGGRVTLAGDAAHAMTSYRGEAFNHGVADAAMLSRNIIAAWTNPGMTGGIADAPDSPIVSKRAKIAREARDARARAKLSEIAV</sequence>
<reference key="1">
    <citation type="journal article" date="2005" name="Nature">
        <title>Sequencing of Aspergillus nidulans and comparative analysis with A. fumigatus and A. oryzae.</title>
        <authorList>
            <person name="Galagan J.E."/>
            <person name="Calvo S.E."/>
            <person name="Cuomo C."/>
            <person name="Ma L.-J."/>
            <person name="Wortman J.R."/>
            <person name="Batzoglou S."/>
            <person name="Lee S.-I."/>
            <person name="Bastuerkmen M."/>
            <person name="Spevak C.C."/>
            <person name="Clutterbuck J."/>
            <person name="Kapitonov V."/>
            <person name="Jurka J."/>
            <person name="Scazzocchio C."/>
            <person name="Farman M.L."/>
            <person name="Butler J."/>
            <person name="Purcell S."/>
            <person name="Harris S."/>
            <person name="Braus G.H."/>
            <person name="Draht O."/>
            <person name="Busch S."/>
            <person name="D'Enfert C."/>
            <person name="Bouchier C."/>
            <person name="Goldman G.H."/>
            <person name="Bell-Pedersen D."/>
            <person name="Griffiths-Jones S."/>
            <person name="Doonan J.H."/>
            <person name="Yu J."/>
            <person name="Vienken K."/>
            <person name="Pain A."/>
            <person name="Freitag M."/>
            <person name="Selker E.U."/>
            <person name="Archer D.B."/>
            <person name="Penalva M.A."/>
            <person name="Oakley B.R."/>
            <person name="Momany M."/>
            <person name="Tanaka T."/>
            <person name="Kumagai T."/>
            <person name="Asai K."/>
            <person name="Machida M."/>
            <person name="Nierman W.C."/>
            <person name="Denning D.W."/>
            <person name="Caddick M.X."/>
            <person name="Hynes M."/>
            <person name="Paoletti M."/>
            <person name="Fischer R."/>
            <person name="Miller B.L."/>
            <person name="Dyer P.S."/>
            <person name="Sachs M.S."/>
            <person name="Osmani S.A."/>
            <person name="Birren B.W."/>
        </authorList>
    </citation>
    <scope>NUCLEOTIDE SEQUENCE [LARGE SCALE GENOMIC DNA]</scope>
    <source>
        <strain>FGSC A4 / ATCC 38163 / CBS 112.46 / NRRL 194 / M139</strain>
    </source>
</reference>
<reference key="2">
    <citation type="journal article" date="2009" name="Fungal Genet. Biol.">
        <title>The 2008 update of the Aspergillus nidulans genome annotation: a community effort.</title>
        <authorList>
            <person name="Wortman J.R."/>
            <person name="Gilsenan J.M."/>
            <person name="Joardar V."/>
            <person name="Deegan J."/>
            <person name="Clutterbuck J."/>
            <person name="Andersen M.R."/>
            <person name="Archer D."/>
            <person name="Bencina M."/>
            <person name="Braus G."/>
            <person name="Coutinho P."/>
            <person name="von Dohren H."/>
            <person name="Doonan J."/>
            <person name="Driessen A.J."/>
            <person name="Durek P."/>
            <person name="Espeso E."/>
            <person name="Fekete E."/>
            <person name="Flipphi M."/>
            <person name="Estrada C.G."/>
            <person name="Geysens S."/>
            <person name="Goldman G."/>
            <person name="de Groot P.W."/>
            <person name="Hansen K."/>
            <person name="Harris S.D."/>
            <person name="Heinekamp T."/>
            <person name="Helmstaedt K."/>
            <person name="Henrissat B."/>
            <person name="Hofmann G."/>
            <person name="Homan T."/>
            <person name="Horio T."/>
            <person name="Horiuchi H."/>
            <person name="James S."/>
            <person name="Jones M."/>
            <person name="Karaffa L."/>
            <person name="Karanyi Z."/>
            <person name="Kato M."/>
            <person name="Keller N."/>
            <person name="Kelly D.E."/>
            <person name="Kiel J.A."/>
            <person name="Kim J.M."/>
            <person name="van der Klei I.J."/>
            <person name="Klis F.M."/>
            <person name="Kovalchuk A."/>
            <person name="Krasevec N."/>
            <person name="Kubicek C.P."/>
            <person name="Liu B."/>
            <person name="Maccabe A."/>
            <person name="Meyer V."/>
            <person name="Mirabito P."/>
            <person name="Miskei M."/>
            <person name="Mos M."/>
            <person name="Mullins J."/>
            <person name="Nelson D.R."/>
            <person name="Nielsen J."/>
            <person name="Oakley B.R."/>
            <person name="Osmani S.A."/>
            <person name="Pakula T."/>
            <person name="Paszewski A."/>
            <person name="Paulsen I."/>
            <person name="Pilsyk S."/>
            <person name="Pocsi I."/>
            <person name="Punt P.J."/>
            <person name="Ram A.F."/>
            <person name="Ren Q."/>
            <person name="Robellet X."/>
            <person name="Robson G."/>
            <person name="Seiboth B."/>
            <person name="van Solingen P."/>
            <person name="Specht T."/>
            <person name="Sun J."/>
            <person name="Taheri-Talesh N."/>
            <person name="Takeshita N."/>
            <person name="Ussery D."/>
            <person name="vanKuyk P.A."/>
            <person name="Visser H."/>
            <person name="van de Vondervoort P.J."/>
            <person name="de Vries R.P."/>
            <person name="Walton J."/>
            <person name="Xiang X."/>
            <person name="Xiong Y."/>
            <person name="Zeng A.P."/>
            <person name="Brandt B.W."/>
            <person name="Cornell M.J."/>
            <person name="van den Hondel C.A."/>
            <person name="Visser J."/>
            <person name="Oliver S.G."/>
            <person name="Turner G."/>
        </authorList>
    </citation>
    <scope>GENOME REANNOTATION</scope>
    <source>
        <strain>FGSC A4 / ATCC 38163 / CBS 112.46 / NRRL 194 / M139</strain>
    </source>
</reference>
<reference key="3">
    <citation type="journal article" date="2012" name="Appl. Environ. Microbiol.">
        <title>Breaking the silence: protein stabilization uncovers silenced biosynthetic gene clusters in the fungus Aspergillus nidulans.</title>
        <authorList>
            <person name="Gerke J."/>
            <person name="Bayram O."/>
            <person name="Feussner K."/>
            <person name="Landesfeind M."/>
            <person name="Shelest E."/>
            <person name="Feussner I."/>
            <person name="Braus G.H."/>
        </authorList>
    </citation>
    <scope>IDENTIFICATION</scope>
    <scope>INDUCTION</scope>
    <scope>FUNCTION</scope>
    <scope>DISRUPTION PHENOTYPE</scope>
    <scope>PATHWAY</scope>
</reference>
<reference key="4">
    <citation type="journal article" date="2012" name="J. Am. Chem. Soc.">
        <title>Illuminating the diversity of aromatic polyketide synthases in Aspergillus nidulans.</title>
        <authorList>
            <person name="Ahuja M."/>
            <person name="Chiang Y.M."/>
            <person name="Chang S.L."/>
            <person name="Praseuth M.B."/>
            <person name="Entwistle R."/>
            <person name="Sanchez J.F."/>
            <person name="Lo H.C."/>
            <person name="Yeh H.H."/>
            <person name="Oakley B.R."/>
            <person name="Wang C.C."/>
        </authorList>
    </citation>
    <scope>FUNCTION</scope>
</reference>
<reference key="5">
    <citation type="journal article" date="2015" name="Genetics">
        <title>Beyond asexual development: modifications in the gene expression profile caused by the absence of the Aspergillus nidulans transcription factor FlbB.</title>
        <authorList>
            <person name="Oiartzabal-Arano E."/>
            <person name="Garzia A."/>
            <person name="Gorostidi A."/>
            <person name="Ugalde U."/>
            <person name="Espeso E.A."/>
            <person name="Etxebeste O."/>
        </authorList>
    </citation>
    <scope>INDUCTION</scope>
</reference>
<evidence type="ECO:0000250" key="1">
    <source>
        <dbReference type="UniProtKB" id="A6T923"/>
    </source>
</evidence>
<evidence type="ECO:0000250" key="2">
    <source>
        <dbReference type="UniProtKB" id="B8M9J8"/>
    </source>
</evidence>
<evidence type="ECO:0000255" key="3"/>
<evidence type="ECO:0000255" key="4">
    <source>
        <dbReference type="PROSITE-ProRule" id="PRU00498"/>
    </source>
</evidence>
<evidence type="ECO:0000269" key="5">
    <source>
    </source>
</evidence>
<evidence type="ECO:0000269" key="6">
    <source>
    </source>
</evidence>
<evidence type="ECO:0000269" key="7">
    <source>
    </source>
</evidence>
<evidence type="ECO:0000303" key="8">
    <source>
    </source>
</evidence>
<evidence type="ECO:0000305" key="9"/>
<evidence type="ECO:0000305" key="10">
    <source>
    </source>
</evidence>
<dbReference type="EC" id="1.-.-.-" evidence="10"/>
<dbReference type="EMBL" id="BN001302">
    <property type="protein sequence ID" value="CBF73480.1"/>
    <property type="molecule type" value="Genomic_DNA"/>
</dbReference>
<dbReference type="EMBL" id="AACD01000135">
    <property type="protein sequence ID" value="EAA59551.1"/>
    <property type="molecule type" value="Genomic_DNA"/>
</dbReference>
<dbReference type="RefSeq" id="XP_681166.1">
    <property type="nucleotide sequence ID" value="XM_676074.1"/>
</dbReference>
<dbReference type="SMR" id="Q5AUY3"/>
<dbReference type="STRING" id="227321.Q5AUY3"/>
<dbReference type="GlyCosmos" id="Q5AUY3">
    <property type="glycosylation" value="2 sites, No reported glycans"/>
</dbReference>
<dbReference type="EnsemblFungi" id="CBF73480">
    <property type="protein sequence ID" value="CBF73480"/>
    <property type="gene ID" value="ANIA_07897"/>
</dbReference>
<dbReference type="GeneID" id="2869255"/>
<dbReference type="KEGG" id="ani:ANIA_07897"/>
<dbReference type="VEuPathDB" id="FungiDB:AN7897"/>
<dbReference type="eggNOG" id="KOG2614">
    <property type="taxonomic scope" value="Eukaryota"/>
</dbReference>
<dbReference type="HOGENOM" id="CLU_009665_3_2_1"/>
<dbReference type="InParanoid" id="Q5AUY3"/>
<dbReference type="OMA" id="EMRIRAN"/>
<dbReference type="OrthoDB" id="47494at2759"/>
<dbReference type="Proteomes" id="UP000000560">
    <property type="component" value="Chromosome II"/>
</dbReference>
<dbReference type="GO" id="GO:0071949">
    <property type="term" value="F:FAD binding"/>
    <property type="evidence" value="ECO:0007669"/>
    <property type="project" value="InterPro"/>
</dbReference>
<dbReference type="GO" id="GO:0004497">
    <property type="term" value="F:monooxygenase activity"/>
    <property type="evidence" value="ECO:0007669"/>
    <property type="project" value="UniProtKB-KW"/>
</dbReference>
<dbReference type="GO" id="GO:0044550">
    <property type="term" value="P:secondary metabolite biosynthetic process"/>
    <property type="evidence" value="ECO:0000270"/>
    <property type="project" value="AspGD"/>
</dbReference>
<dbReference type="Gene3D" id="3.50.50.60">
    <property type="entry name" value="FAD/NAD(P)-binding domain"/>
    <property type="match status" value="1"/>
</dbReference>
<dbReference type="InterPro" id="IPR002938">
    <property type="entry name" value="FAD-bd"/>
</dbReference>
<dbReference type="InterPro" id="IPR036188">
    <property type="entry name" value="FAD/NAD-bd_sf"/>
</dbReference>
<dbReference type="PANTHER" id="PTHR47178:SF1">
    <property type="entry name" value="FAD-BINDING DOMAIN-CONTAINING PROTEIN-RELATED"/>
    <property type="match status" value="1"/>
</dbReference>
<dbReference type="PANTHER" id="PTHR47178">
    <property type="entry name" value="MONOOXYGENASE, FAD-BINDING"/>
    <property type="match status" value="1"/>
</dbReference>
<dbReference type="Pfam" id="PF01494">
    <property type="entry name" value="FAD_binding_3"/>
    <property type="match status" value="1"/>
</dbReference>
<dbReference type="PRINTS" id="PR00420">
    <property type="entry name" value="RNGMNOXGNASE"/>
</dbReference>
<dbReference type="SUPFAM" id="SSF51905">
    <property type="entry name" value="FAD/NAD(P)-binding domain"/>
    <property type="match status" value="1"/>
</dbReference>